<sequence>MNFNLKQKLDLAPKKPGCYLWKNHLNEIIYIGKAKNIYKRVHQYFNGPKDLKTSKLVNEIFYVEFIEVNNENEALLLEANLIKKHKPRYNILLKDNNGYPYILMTKEKYPRLIYTRNFDPKKGKHYGPFASSEMKAYDLYNLLLKLFPLKNCFNKKGRKCEFYDLNLCMKACTHEVSEADYEVMKKKIDYFFHNGADQVLKDLKEKESIASEKFDFEQAKKYLDLQKAINLIFDKQIINLYSAKERIDVLAYQIKENVICIVLFSYVSSQLVSKNTICDFYYGEEQEVITSYLSQYYKDNIKPKILYASLDQANATLLKDSLGIEIINPTSGKMNEIMSLALQNVTNELSQKYDSLVKKEQRINLALDQLKKLIKVDKLNHLEVYDNSNLFNTDKVSAMIVFENNQFNKKKYRKYKIKDQQALGDYHYMYEVIYRRLYQALKNNFVDLPDLIILDGGKHQVLAAKKAIVDLQIDKKINLIGLAKNNKHQTDKIVTFDLDEISLDKSSALYFFLANLQEEVHKFAISFFRKTKAKSLYDSILDQIKGLGKKRKQQLIEHFKTIDEIKKASIASLSQVLPIEIAKKLKQKLDQS</sequence>
<dbReference type="EMBL" id="AE015450">
    <property type="protein sequence ID" value="AAP56705.2"/>
    <property type="status" value="ALT_INIT"/>
    <property type="molecule type" value="Genomic_DNA"/>
</dbReference>
<dbReference type="SMR" id="Q7NBC4"/>
<dbReference type="KEGG" id="mga:MGA_1269"/>
<dbReference type="HOGENOM" id="CLU_014841_3_2_14"/>
<dbReference type="Proteomes" id="UP000001418">
    <property type="component" value="Chromosome"/>
</dbReference>
<dbReference type="GO" id="GO:0005737">
    <property type="term" value="C:cytoplasm"/>
    <property type="evidence" value="ECO:0007669"/>
    <property type="project" value="UniProtKB-SubCell"/>
</dbReference>
<dbReference type="GO" id="GO:0009380">
    <property type="term" value="C:excinuclease repair complex"/>
    <property type="evidence" value="ECO:0007669"/>
    <property type="project" value="InterPro"/>
</dbReference>
<dbReference type="GO" id="GO:0003677">
    <property type="term" value="F:DNA binding"/>
    <property type="evidence" value="ECO:0007669"/>
    <property type="project" value="UniProtKB-UniRule"/>
</dbReference>
<dbReference type="GO" id="GO:0009381">
    <property type="term" value="F:excinuclease ABC activity"/>
    <property type="evidence" value="ECO:0007669"/>
    <property type="project" value="UniProtKB-UniRule"/>
</dbReference>
<dbReference type="GO" id="GO:0006289">
    <property type="term" value="P:nucleotide-excision repair"/>
    <property type="evidence" value="ECO:0007669"/>
    <property type="project" value="UniProtKB-UniRule"/>
</dbReference>
<dbReference type="GO" id="GO:0009432">
    <property type="term" value="P:SOS response"/>
    <property type="evidence" value="ECO:0007669"/>
    <property type="project" value="UniProtKB-UniRule"/>
</dbReference>
<dbReference type="CDD" id="cd10434">
    <property type="entry name" value="GIY-YIG_UvrC_Cho"/>
    <property type="match status" value="1"/>
</dbReference>
<dbReference type="FunFam" id="3.40.1440.10:FF:000001">
    <property type="entry name" value="UvrABC system protein C"/>
    <property type="match status" value="1"/>
</dbReference>
<dbReference type="Gene3D" id="1.10.150.20">
    <property type="entry name" value="5' to 3' exonuclease, C-terminal subdomain"/>
    <property type="match status" value="1"/>
</dbReference>
<dbReference type="Gene3D" id="3.40.1440.10">
    <property type="entry name" value="GIY-YIG endonuclease"/>
    <property type="match status" value="1"/>
</dbReference>
<dbReference type="Gene3D" id="3.30.420.340">
    <property type="entry name" value="UvrC, RNAse H endonuclease domain"/>
    <property type="match status" value="1"/>
</dbReference>
<dbReference type="HAMAP" id="MF_00203">
    <property type="entry name" value="UvrC"/>
    <property type="match status" value="1"/>
</dbReference>
<dbReference type="InterPro" id="IPR000305">
    <property type="entry name" value="GIY-YIG_endonuc"/>
</dbReference>
<dbReference type="InterPro" id="IPR035901">
    <property type="entry name" value="GIY-YIG_endonuc_sf"/>
</dbReference>
<dbReference type="InterPro" id="IPR047296">
    <property type="entry name" value="GIY-YIG_UvrC_Cho"/>
</dbReference>
<dbReference type="InterPro" id="IPR010994">
    <property type="entry name" value="RuvA_2-like"/>
</dbReference>
<dbReference type="InterPro" id="IPR050066">
    <property type="entry name" value="UvrABC_protein_C"/>
</dbReference>
<dbReference type="InterPro" id="IPR004791">
    <property type="entry name" value="UvrC"/>
</dbReference>
<dbReference type="InterPro" id="IPR001162">
    <property type="entry name" value="UvrC_RNase_H_dom"/>
</dbReference>
<dbReference type="InterPro" id="IPR038476">
    <property type="entry name" value="UvrC_RNase_H_dom_sf"/>
</dbReference>
<dbReference type="NCBIfam" id="TIGR00194">
    <property type="entry name" value="uvrC"/>
    <property type="match status" value="1"/>
</dbReference>
<dbReference type="PANTHER" id="PTHR30562:SF1">
    <property type="entry name" value="UVRABC SYSTEM PROTEIN C"/>
    <property type="match status" value="1"/>
</dbReference>
<dbReference type="PANTHER" id="PTHR30562">
    <property type="entry name" value="UVRC/OXIDOREDUCTASE"/>
    <property type="match status" value="1"/>
</dbReference>
<dbReference type="Pfam" id="PF01541">
    <property type="entry name" value="GIY-YIG"/>
    <property type="match status" value="1"/>
</dbReference>
<dbReference type="Pfam" id="PF22920">
    <property type="entry name" value="UvrC_RNaseH"/>
    <property type="match status" value="1"/>
</dbReference>
<dbReference type="Pfam" id="PF08459">
    <property type="entry name" value="UvrC_RNaseH_dom"/>
    <property type="match status" value="1"/>
</dbReference>
<dbReference type="SMART" id="SM00465">
    <property type="entry name" value="GIYc"/>
    <property type="match status" value="1"/>
</dbReference>
<dbReference type="SUPFAM" id="SSF82771">
    <property type="entry name" value="GIY-YIG endonuclease"/>
    <property type="match status" value="1"/>
</dbReference>
<dbReference type="SUPFAM" id="SSF47781">
    <property type="entry name" value="RuvA domain 2-like"/>
    <property type="match status" value="1"/>
</dbReference>
<dbReference type="PROSITE" id="PS50164">
    <property type="entry name" value="GIY_YIG"/>
    <property type="match status" value="1"/>
</dbReference>
<dbReference type="PROSITE" id="PS50165">
    <property type="entry name" value="UVRC"/>
    <property type="match status" value="1"/>
</dbReference>
<comment type="function">
    <text evidence="1">The UvrABC repair system catalyzes the recognition and processing of DNA lesions. UvrC both incises the 5' and 3' sides of the lesion. The N-terminal half is responsible for the 3' incision and the C-terminal half is responsible for the 5' incision.</text>
</comment>
<comment type="subunit">
    <text evidence="1">Interacts with UvrB in an incision complex.</text>
</comment>
<comment type="subcellular location">
    <subcellularLocation>
        <location evidence="1">Cytoplasm</location>
    </subcellularLocation>
</comment>
<comment type="similarity">
    <text evidence="1">Belongs to the UvrC family.</text>
</comment>
<comment type="sequence caution" evidence="2">
    <conflict type="erroneous initiation">
        <sequence resource="EMBL-CDS" id="AAP56705"/>
    </conflict>
    <text>Extended N-terminus.</text>
</comment>
<protein>
    <recommendedName>
        <fullName evidence="1">UvrABC system protein C</fullName>
        <shortName evidence="1">Protein UvrC</shortName>
    </recommendedName>
    <alternativeName>
        <fullName evidence="1">Excinuclease ABC subunit C</fullName>
    </alternativeName>
</protein>
<accession>Q7NBC4</accession>
<evidence type="ECO:0000255" key="1">
    <source>
        <dbReference type="HAMAP-Rule" id="MF_00203"/>
    </source>
</evidence>
<evidence type="ECO:0000305" key="2"/>
<proteinExistence type="inferred from homology"/>
<keyword id="KW-0963">Cytoplasm</keyword>
<keyword id="KW-0227">DNA damage</keyword>
<keyword id="KW-0228">DNA excision</keyword>
<keyword id="KW-0234">DNA repair</keyword>
<keyword id="KW-0267">Excision nuclease</keyword>
<keyword id="KW-1185">Reference proteome</keyword>
<keyword id="KW-0742">SOS response</keyword>
<name>UVRC_MYCGA</name>
<reference key="1">
    <citation type="journal article" date="2003" name="Microbiology">
        <title>The complete genome sequence of the avian pathogen Mycoplasma gallisepticum strain R(low).</title>
        <authorList>
            <person name="Papazisi L."/>
            <person name="Gorton T.S."/>
            <person name="Kutish G."/>
            <person name="Markham P.F."/>
            <person name="Browning G.F."/>
            <person name="Nguyen D.K."/>
            <person name="Swartzell S."/>
            <person name="Madan A."/>
            <person name="Mahairas G."/>
            <person name="Geary S.J."/>
        </authorList>
    </citation>
    <scope>NUCLEOTIDE SEQUENCE [LARGE SCALE GENOMIC DNA]</scope>
    <source>
        <strain>R(low / passage 15 / clone 2)</strain>
    </source>
</reference>
<organism>
    <name type="scientific">Mycoplasmoides gallisepticum (strain R(low / passage 15 / clone 2))</name>
    <name type="common">Mycoplasma gallisepticum</name>
    <dbReference type="NCBI Taxonomy" id="710127"/>
    <lineage>
        <taxon>Bacteria</taxon>
        <taxon>Bacillati</taxon>
        <taxon>Mycoplasmatota</taxon>
        <taxon>Mycoplasmoidales</taxon>
        <taxon>Mycoplasmoidaceae</taxon>
        <taxon>Mycoplasmoides</taxon>
    </lineage>
</organism>
<gene>
    <name evidence="1" type="primary">uvrC</name>
    <name type="ordered locus">MYCGA3550</name>
    <name type="ORF">MGA_1269</name>
</gene>
<feature type="chain" id="PRO_0000264915" description="UvrABC system protein C">
    <location>
        <begin position="1"/>
        <end position="592"/>
    </location>
</feature>
<feature type="domain" description="GIY-YIG" evidence="1">
    <location>
        <begin position="14"/>
        <end position="91"/>
    </location>
</feature>
<feature type="domain" description="UVR" evidence="1">
    <location>
        <begin position="197"/>
        <end position="232"/>
    </location>
</feature>